<feature type="chain" id="PRO_0000368392" description="ATP synthase subunit b">
    <location>
        <begin position="1"/>
        <end position="156"/>
    </location>
</feature>
<feature type="transmembrane region" description="Helical" evidence="1">
    <location>
        <begin position="7"/>
        <end position="29"/>
    </location>
</feature>
<dbReference type="EMBL" id="CP000572">
    <property type="protein sequence ID" value="ABN91846.1"/>
    <property type="molecule type" value="Genomic_DNA"/>
</dbReference>
<dbReference type="RefSeq" id="WP_004185283.1">
    <property type="nucleotide sequence ID" value="NC_009076.1"/>
</dbReference>
<dbReference type="SMR" id="A3P0Z4"/>
<dbReference type="KEGG" id="bpl:BURPS1106A_4046"/>
<dbReference type="HOGENOM" id="CLU_079215_4_5_4"/>
<dbReference type="Proteomes" id="UP000006738">
    <property type="component" value="Chromosome I"/>
</dbReference>
<dbReference type="GO" id="GO:0005886">
    <property type="term" value="C:plasma membrane"/>
    <property type="evidence" value="ECO:0007669"/>
    <property type="project" value="UniProtKB-SubCell"/>
</dbReference>
<dbReference type="GO" id="GO:0045259">
    <property type="term" value="C:proton-transporting ATP synthase complex"/>
    <property type="evidence" value="ECO:0007669"/>
    <property type="project" value="UniProtKB-KW"/>
</dbReference>
<dbReference type="GO" id="GO:0046933">
    <property type="term" value="F:proton-transporting ATP synthase activity, rotational mechanism"/>
    <property type="evidence" value="ECO:0007669"/>
    <property type="project" value="UniProtKB-UniRule"/>
</dbReference>
<dbReference type="GO" id="GO:0046961">
    <property type="term" value="F:proton-transporting ATPase activity, rotational mechanism"/>
    <property type="evidence" value="ECO:0007669"/>
    <property type="project" value="TreeGrafter"/>
</dbReference>
<dbReference type="CDD" id="cd06503">
    <property type="entry name" value="ATP-synt_Fo_b"/>
    <property type="match status" value="1"/>
</dbReference>
<dbReference type="Gene3D" id="6.10.250.1580">
    <property type="match status" value="1"/>
</dbReference>
<dbReference type="HAMAP" id="MF_01398">
    <property type="entry name" value="ATP_synth_b_bprime"/>
    <property type="match status" value="1"/>
</dbReference>
<dbReference type="InterPro" id="IPR028987">
    <property type="entry name" value="ATP_synth_B-like_membr_sf"/>
</dbReference>
<dbReference type="InterPro" id="IPR002146">
    <property type="entry name" value="ATP_synth_b/b'su_bac/chlpt"/>
</dbReference>
<dbReference type="InterPro" id="IPR005864">
    <property type="entry name" value="ATP_synth_F0_bsu_bac"/>
</dbReference>
<dbReference type="InterPro" id="IPR050059">
    <property type="entry name" value="ATP_synthase_B_chain"/>
</dbReference>
<dbReference type="NCBIfam" id="TIGR01144">
    <property type="entry name" value="ATP_synt_b"/>
    <property type="match status" value="1"/>
</dbReference>
<dbReference type="NCBIfam" id="NF004411">
    <property type="entry name" value="PRK05759.1-2"/>
    <property type="match status" value="1"/>
</dbReference>
<dbReference type="PANTHER" id="PTHR33445:SF1">
    <property type="entry name" value="ATP SYNTHASE SUBUNIT B"/>
    <property type="match status" value="1"/>
</dbReference>
<dbReference type="PANTHER" id="PTHR33445">
    <property type="entry name" value="ATP SYNTHASE SUBUNIT B', CHLOROPLASTIC"/>
    <property type="match status" value="1"/>
</dbReference>
<dbReference type="Pfam" id="PF00430">
    <property type="entry name" value="ATP-synt_B"/>
    <property type="match status" value="1"/>
</dbReference>
<dbReference type="SUPFAM" id="SSF81573">
    <property type="entry name" value="F1F0 ATP synthase subunit B, membrane domain"/>
    <property type="match status" value="1"/>
</dbReference>
<protein>
    <recommendedName>
        <fullName evidence="1">ATP synthase subunit b</fullName>
    </recommendedName>
    <alternativeName>
        <fullName evidence="1">ATP synthase F(0) sector subunit b</fullName>
    </alternativeName>
    <alternativeName>
        <fullName evidence="1">ATPase subunit I</fullName>
    </alternativeName>
    <alternativeName>
        <fullName evidence="1">F-type ATPase subunit b</fullName>
        <shortName evidence="1">F-ATPase subunit b</shortName>
    </alternativeName>
</protein>
<organism>
    <name type="scientific">Burkholderia pseudomallei (strain 1106a)</name>
    <dbReference type="NCBI Taxonomy" id="357348"/>
    <lineage>
        <taxon>Bacteria</taxon>
        <taxon>Pseudomonadati</taxon>
        <taxon>Pseudomonadota</taxon>
        <taxon>Betaproteobacteria</taxon>
        <taxon>Burkholderiales</taxon>
        <taxon>Burkholderiaceae</taxon>
        <taxon>Burkholderia</taxon>
        <taxon>pseudomallei group</taxon>
    </lineage>
</organism>
<reference key="1">
    <citation type="journal article" date="2010" name="Genome Biol. Evol.">
        <title>Continuing evolution of Burkholderia mallei through genome reduction and large-scale rearrangements.</title>
        <authorList>
            <person name="Losada L."/>
            <person name="Ronning C.M."/>
            <person name="DeShazer D."/>
            <person name="Woods D."/>
            <person name="Fedorova N."/>
            <person name="Kim H.S."/>
            <person name="Shabalina S.A."/>
            <person name="Pearson T.R."/>
            <person name="Brinkac L."/>
            <person name="Tan P."/>
            <person name="Nandi T."/>
            <person name="Crabtree J."/>
            <person name="Badger J."/>
            <person name="Beckstrom-Sternberg S."/>
            <person name="Saqib M."/>
            <person name="Schutzer S.E."/>
            <person name="Keim P."/>
            <person name="Nierman W.C."/>
        </authorList>
    </citation>
    <scope>NUCLEOTIDE SEQUENCE [LARGE SCALE GENOMIC DNA]</scope>
    <source>
        <strain>1106a</strain>
    </source>
</reference>
<comment type="function">
    <text evidence="1">F(1)F(0) ATP synthase produces ATP from ADP in the presence of a proton or sodium gradient. F-type ATPases consist of two structural domains, F(1) containing the extramembraneous catalytic core and F(0) containing the membrane proton channel, linked together by a central stalk and a peripheral stalk. During catalysis, ATP synthesis in the catalytic domain of F(1) is coupled via a rotary mechanism of the central stalk subunits to proton translocation.</text>
</comment>
<comment type="function">
    <text evidence="1">Component of the F(0) channel, it forms part of the peripheral stalk, linking F(1) to F(0).</text>
</comment>
<comment type="subunit">
    <text evidence="1">F-type ATPases have 2 components, F(1) - the catalytic core - and F(0) - the membrane proton channel. F(1) has five subunits: alpha(3), beta(3), gamma(1), delta(1), epsilon(1). F(0) has three main subunits: a(1), b(2) and c(10-14). The alpha and beta chains form an alternating ring which encloses part of the gamma chain. F(1) is attached to F(0) by a central stalk formed by the gamma and epsilon chains, while a peripheral stalk is formed by the delta and b chains.</text>
</comment>
<comment type="subcellular location">
    <subcellularLocation>
        <location evidence="1">Cell inner membrane</location>
        <topology evidence="1">Single-pass membrane protein</topology>
    </subcellularLocation>
</comment>
<comment type="similarity">
    <text evidence="1">Belongs to the ATPase B chain family.</text>
</comment>
<sequence length="156" mass="17122">MNLNATLFAQMVVFLVLAWFTMKFVWPPLINALDERSKKIADGLAAAEKGKAELEAAHKRVDQELAQARNDGQQRIADAEKRALAVADEIKTNAQAEAARIIAQAKAEAEQQIVKARETLRGEVAALAVKGAEQILKREVDQTAHAELLNQLKAEL</sequence>
<accession>A3P0Z4</accession>
<gene>
    <name evidence="1" type="primary">atpF</name>
    <name type="ordered locus">BURPS1106A_4046</name>
</gene>
<name>ATPF_BURP0</name>
<keyword id="KW-0066">ATP synthesis</keyword>
<keyword id="KW-0997">Cell inner membrane</keyword>
<keyword id="KW-1003">Cell membrane</keyword>
<keyword id="KW-0138">CF(0)</keyword>
<keyword id="KW-0375">Hydrogen ion transport</keyword>
<keyword id="KW-0406">Ion transport</keyword>
<keyword id="KW-0472">Membrane</keyword>
<keyword id="KW-0812">Transmembrane</keyword>
<keyword id="KW-1133">Transmembrane helix</keyword>
<keyword id="KW-0813">Transport</keyword>
<evidence type="ECO:0000255" key="1">
    <source>
        <dbReference type="HAMAP-Rule" id="MF_01398"/>
    </source>
</evidence>
<proteinExistence type="inferred from homology"/>